<proteinExistence type="inferred from homology"/>
<reference key="1">
    <citation type="submission" date="2006-10" db="EMBL/GenBank/DDBJ databases">
        <title>Complete sequence of Syntrophobacter fumaroxidans MPOB.</title>
        <authorList>
            <consortium name="US DOE Joint Genome Institute"/>
            <person name="Copeland A."/>
            <person name="Lucas S."/>
            <person name="Lapidus A."/>
            <person name="Barry K."/>
            <person name="Detter J.C."/>
            <person name="Glavina del Rio T."/>
            <person name="Hammon N."/>
            <person name="Israni S."/>
            <person name="Pitluck S."/>
            <person name="Goltsman E.G."/>
            <person name="Martinez M."/>
            <person name="Schmutz J."/>
            <person name="Larimer F."/>
            <person name="Land M."/>
            <person name="Hauser L."/>
            <person name="Kyrpides N."/>
            <person name="Kim E."/>
            <person name="Boone D.R."/>
            <person name="Brockman F."/>
            <person name="Culley D."/>
            <person name="Ferry J."/>
            <person name="Gunsalus R."/>
            <person name="McInerney M.J."/>
            <person name="Morrison M."/>
            <person name="Plugge C."/>
            <person name="Rohlin L."/>
            <person name="Scholten J."/>
            <person name="Sieber J."/>
            <person name="Stams A.J.M."/>
            <person name="Worm P."/>
            <person name="Henstra A.M."/>
            <person name="Richardson P."/>
        </authorList>
    </citation>
    <scope>NUCLEOTIDE SEQUENCE [LARGE SCALE GENOMIC DNA]</scope>
    <source>
        <strain>DSM 10017 / MPOB</strain>
    </source>
</reference>
<comment type="catalytic activity">
    <reaction evidence="1">
        <text>D-arabinose 5-phosphate + phosphoenolpyruvate + H2O = 3-deoxy-alpha-D-manno-2-octulosonate-8-phosphate + phosphate</text>
        <dbReference type="Rhea" id="RHEA:14053"/>
        <dbReference type="ChEBI" id="CHEBI:15377"/>
        <dbReference type="ChEBI" id="CHEBI:43474"/>
        <dbReference type="ChEBI" id="CHEBI:57693"/>
        <dbReference type="ChEBI" id="CHEBI:58702"/>
        <dbReference type="ChEBI" id="CHEBI:85985"/>
        <dbReference type="EC" id="2.5.1.55"/>
    </reaction>
</comment>
<comment type="pathway">
    <text evidence="1">Carbohydrate biosynthesis; 3-deoxy-D-manno-octulosonate biosynthesis; 3-deoxy-D-manno-octulosonate from D-ribulose 5-phosphate: step 2/3.</text>
</comment>
<comment type="pathway">
    <text evidence="1">Bacterial outer membrane biogenesis; lipopolysaccharide biosynthesis.</text>
</comment>
<comment type="subcellular location">
    <subcellularLocation>
        <location evidence="1">Cytoplasm</location>
    </subcellularLocation>
</comment>
<comment type="similarity">
    <text evidence="1">Belongs to the KdsA family.</text>
</comment>
<name>KDSA_SYNFM</name>
<sequence>MADFEVLGQTVGTNRFFVIGGPCVIENRDMTLRIAEFLRNACARLHIPCVFKSSYDKANRTSIHSYRGPGIEEGLAILSEVRREIGIPVLTDVHGVSEVAPAKEVVDILQVPAFLARQTDLVVAVGLTGKPVNLKKAQFLAPRDMSLVIEKVRGTGNDKILVTERGTQFGYNNLVVDMRSIPILSESGCPVVFDATHSVQLPGGQGTRSGGERRYVAALACAAVAAGAHGVFLEMHEDPDRALCDGPNSLPLEQVSPLLEKLLDIHRIVRDTYGAQDADIERKTGREH</sequence>
<accession>A0LK05</accession>
<keyword id="KW-0963">Cytoplasm</keyword>
<keyword id="KW-0448">Lipopolysaccharide biosynthesis</keyword>
<keyword id="KW-1185">Reference proteome</keyword>
<keyword id="KW-0808">Transferase</keyword>
<organism>
    <name type="scientific">Syntrophobacter fumaroxidans (strain DSM 10017 / MPOB)</name>
    <dbReference type="NCBI Taxonomy" id="335543"/>
    <lineage>
        <taxon>Bacteria</taxon>
        <taxon>Pseudomonadati</taxon>
        <taxon>Thermodesulfobacteriota</taxon>
        <taxon>Syntrophobacteria</taxon>
        <taxon>Syntrophobacterales</taxon>
        <taxon>Syntrophobacteraceae</taxon>
        <taxon>Syntrophobacter</taxon>
    </lineage>
</organism>
<dbReference type="EC" id="2.5.1.55" evidence="1"/>
<dbReference type="EMBL" id="CP000478">
    <property type="protein sequence ID" value="ABK17757.1"/>
    <property type="molecule type" value="Genomic_DNA"/>
</dbReference>
<dbReference type="RefSeq" id="WP_011698926.1">
    <property type="nucleotide sequence ID" value="NC_008554.1"/>
</dbReference>
<dbReference type="SMR" id="A0LK05"/>
<dbReference type="FunCoup" id="A0LK05">
    <property type="interactions" value="410"/>
</dbReference>
<dbReference type="STRING" id="335543.Sfum_2074"/>
<dbReference type="KEGG" id="sfu:Sfum_2074"/>
<dbReference type="eggNOG" id="COG2877">
    <property type="taxonomic scope" value="Bacteria"/>
</dbReference>
<dbReference type="HOGENOM" id="CLU_036666_0_0_7"/>
<dbReference type="InParanoid" id="A0LK05"/>
<dbReference type="OrthoDB" id="9802281at2"/>
<dbReference type="UniPathway" id="UPA00030"/>
<dbReference type="UniPathway" id="UPA00357">
    <property type="reaction ID" value="UER00474"/>
</dbReference>
<dbReference type="Proteomes" id="UP000001784">
    <property type="component" value="Chromosome"/>
</dbReference>
<dbReference type="GO" id="GO:0005737">
    <property type="term" value="C:cytoplasm"/>
    <property type="evidence" value="ECO:0007669"/>
    <property type="project" value="UniProtKB-SubCell"/>
</dbReference>
<dbReference type="GO" id="GO:0008676">
    <property type="term" value="F:3-deoxy-8-phosphooctulonate synthase activity"/>
    <property type="evidence" value="ECO:0007669"/>
    <property type="project" value="UniProtKB-UniRule"/>
</dbReference>
<dbReference type="GO" id="GO:0019294">
    <property type="term" value="P:keto-3-deoxy-D-manno-octulosonic acid biosynthetic process"/>
    <property type="evidence" value="ECO:0007669"/>
    <property type="project" value="UniProtKB-UniRule"/>
</dbReference>
<dbReference type="Gene3D" id="3.20.20.70">
    <property type="entry name" value="Aldolase class I"/>
    <property type="match status" value="1"/>
</dbReference>
<dbReference type="HAMAP" id="MF_00056">
    <property type="entry name" value="KDO8P_synth"/>
    <property type="match status" value="1"/>
</dbReference>
<dbReference type="InterPro" id="IPR013785">
    <property type="entry name" value="Aldolase_TIM"/>
</dbReference>
<dbReference type="InterPro" id="IPR006218">
    <property type="entry name" value="DAHP1/KDSA"/>
</dbReference>
<dbReference type="InterPro" id="IPR006269">
    <property type="entry name" value="KDO8P_synthase"/>
</dbReference>
<dbReference type="NCBIfam" id="TIGR01362">
    <property type="entry name" value="KDO8P_synth"/>
    <property type="match status" value="1"/>
</dbReference>
<dbReference type="NCBIfam" id="NF003543">
    <property type="entry name" value="PRK05198.1"/>
    <property type="match status" value="1"/>
</dbReference>
<dbReference type="PANTHER" id="PTHR21057">
    <property type="entry name" value="PHOSPHO-2-DEHYDRO-3-DEOXYHEPTONATE ALDOLASE"/>
    <property type="match status" value="1"/>
</dbReference>
<dbReference type="Pfam" id="PF00793">
    <property type="entry name" value="DAHP_synth_1"/>
    <property type="match status" value="1"/>
</dbReference>
<dbReference type="SUPFAM" id="SSF51569">
    <property type="entry name" value="Aldolase"/>
    <property type="match status" value="1"/>
</dbReference>
<feature type="chain" id="PRO_1000074993" description="2-dehydro-3-deoxyphosphooctonate aldolase">
    <location>
        <begin position="1"/>
        <end position="288"/>
    </location>
</feature>
<gene>
    <name evidence="1" type="primary">kdsA</name>
    <name type="ordered locus">Sfum_2074</name>
</gene>
<evidence type="ECO:0000255" key="1">
    <source>
        <dbReference type="HAMAP-Rule" id="MF_00056"/>
    </source>
</evidence>
<protein>
    <recommendedName>
        <fullName evidence="1">2-dehydro-3-deoxyphosphooctonate aldolase</fullName>
        <ecNumber evidence="1">2.5.1.55</ecNumber>
    </recommendedName>
    <alternativeName>
        <fullName evidence="1">3-deoxy-D-manno-octulosonic acid 8-phosphate synthase</fullName>
    </alternativeName>
    <alternativeName>
        <fullName evidence="1">KDO-8-phosphate synthase</fullName>
        <shortName evidence="1">KDO 8-P synthase</shortName>
        <shortName evidence="1">KDOPS</shortName>
    </alternativeName>
    <alternativeName>
        <fullName evidence="1">Phospho-2-dehydro-3-deoxyoctonate aldolase</fullName>
    </alternativeName>
</protein>